<name>RS2_LACP7</name>
<accession>A9KNC4</accession>
<proteinExistence type="inferred from homology"/>
<dbReference type="EMBL" id="CP000885">
    <property type="protein sequence ID" value="ABX43041.1"/>
    <property type="molecule type" value="Genomic_DNA"/>
</dbReference>
<dbReference type="RefSeq" id="WP_012200693.1">
    <property type="nucleotide sequence ID" value="NC_010001.1"/>
</dbReference>
<dbReference type="SMR" id="A9KNC4"/>
<dbReference type="STRING" id="357809.Cphy_2680"/>
<dbReference type="KEGG" id="cpy:Cphy_2680"/>
<dbReference type="eggNOG" id="COG0052">
    <property type="taxonomic scope" value="Bacteria"/>
</dbReference>
<dbReference type="HOGENOM" id="CLU_040318_1_2_9"/>
<dbReference type="OrthoDB" id="9808036at2"/>
<dbReference type="Proteomes" id="UP000000370">
    <property type="component" value="Chromosome"/>
</dbReference>
<dbReference type="GO" id="GO:0022627">
    <property type="term" value="C:cytosolic small ribosomal subunit"/>
    <property type="evidence" value="ECO:0007669"/>
    <property type="project" value="TreeGrafter"/>
</dbReference>
<dbReference type="GO" id="GO:0003735">
    <property type="term" value="F:structural constituent of ribosome"/>
    <property type="evidence" value="ECO:0007669"/>
    <property type="project" value="InterPro"/>
</dbReference>
<dbReference type="GO" id="GO:0006412">
    <property type="term" value="P:translation"/>
    <property type="evidence" value="ECO:0007669"/>
    <property type="project" value="UniProtKB-UniRule"/>
</dbReference>
<dbReference type="CDD" id="cd01425">
    <property type="entry name" value="RPS2"/>
    <property type="match status" value="1"/>
</dbReference>
<dbReference type="FunFam" id="1.10.287.610:FF:000001">
    <property type="entry name" value="30S ribosomal protein S2"/>
    <property type="match status" value="1"/>
</dbReference>
<dbReference type="Gene3D" id="3.40.50.10490">
    <property type="entry name" value="Glucose-6-phosphate isomerase like protein, domain 1"/>
    <property type="match status" value="1"/>
</dbReference>
<dbReference type="Gene3D" id="1.10.287.610">
    <property type="entry name" value="Helix hairpin bin"/>
    <property type="match status" value="1"/>
</dbReference>
<dbReference type="HAMAP" id="MF_00291_B">
    <property type="entry name" value="Ribosomal_uS2_B"/>
    <property type="match status" value="1"/>
</dbReference>
<dbReference type="InterPro" id="IPR001865">
    <property type="entry name" value="Ribosomal_uS2"/>
</dbReference>
<dbReference type="InterPro" id="IPR005706">
    <property type="entry name" value="Ribosomal_uS2_bac/mit/plastid"/>
</dbReference>
<dbReference type="InterPro" id="IPR018130">
    <property type="entry name" value="Ribosomal_uS2_CS"/>
</dbReference>
<dbReference type="InterPro" id="IPR023591">
    <property type="entry name" value="Ribosomal_uS2_flav_dom_sf"/>
</dbReference>
<dbReference type="NCBIfam" id="TIGR01011">
    <property type="entry name" value="rpsB_bact"/>
    <property type="match status" value="1"/>
</dbReference>
<dbReference type="PANTHER" id="PTHR12534">
    <property type="entry name" value="30S RIBOSOMAL PROTEIN S2 PROKARYOTIC AND ORGANELLAR"/>
    <property type="match status" value="1"/>
</dbReference>
<dbReference type="PANTHER" id="PTHR12534:SF0">
    <property type="entry name" value="SMALL RIBOSOMAL SUBUNIT PROTEIN US2M"/>
    <property type="match status" value="1"/>
</dbReference>
<dbReference type="Pfam" id="PF00318">
    <property type="entry name" value="Ribosomal_S2"/>
    <property type="match status" value="1"/>
</dbReference>
<dbReference type="PRINTS" id="PR00395">
    <property type="entry name" value="RIBOSOMALS2"/>
</dbReference>
<dbReference type="SUPFAM" id="SSF52313">
    <property type="entry name" value="Ribosomal protein S2"/>
    <property type="match status" value="1"/>
</dbReference>
<dbReference type="PROSITE" id="PS00962">
    <property type="entry name" value="RIBOSOMAL_S2_1"/>
    <property type="match status" value="1"/>
</dbReference>
<reference key="1">
    <citation type="submission" date="2007-11" db="EMBL/GenBank/DDBJ databases">
        <title>Complete genome sequence of Clostridium phytofermentans ISDg.</title>
        <authorList>
            <person name="Leschine S.B."/>
            <person name="Warnick T.A."/>
            <person name="Blanchard J.L."/>
            <person name="Schnell D.J."/>
            <person name="Petit E.L."/>
            <person name="LaTouf W.G."/>
            <person name="Copeland A."/>
            <person name="Lucas S."/>
            <person name="Lapidus A."/>
            <person name="Barry K."/>
            <person name="Glavina del Rio T."/>
            <person name="Dalin E."/>
            <person name="Tice H."/>
            <person name="Pitluck S."/>
            <person name="Kiss H."/>
            <person name="Brettin T."/>
            <person name="Bruce D."/>
            <person name="Detter J.C."/>
            <person name="Han C."/>
            <person name="Kuske C."/>
            <person name="Schmutz J."/>
            <person name="Larimer F."/>
            <person name="Land M."/>
            <person name="Hauser L."/>
            <person name="Kyrpides N."/>
            <person name="Kim E.A."/>
            <person name="Richardson P."/>
        </authorList>
    </citation>
    <scope>NUCLEOTIDE SEQUENCE [LARGE SCALE GENOMIC DNA]</scope>
    <source>
        <strain>ATCC 700394 / DSM 18823 / ISDg</strain>
    </source>
</reference>
<feature type="chain" id="PRO_1000078875" description="Small ribosomal subunit protein uS2">
    <location>
        <begin position="1"/>
        <end position="246"/>
    </location>
</feature>
<organism>
    <name type="scientific">Lachnoclostridium phytofermentans (strain ATCC 700394 / DSM 18823 / ISDg)</name>
    <name type="common">Clostridium phytofermentans</name>
    <dbReference type="NCBI Taxonomy" id="357809"/>
    <lineage>
        <taxon>Bacteria</taxon>
        <taxon>Bacillati</taxon>
        <taxon>Bacillota</taxon>
        <taxon>Clostridia</taxon>
        <taxon>Lachnospirales</taxon>
        <taxon>Lachnospiraceae</taxon>
    </lineage>
</organism>
<sequence>MSVISMKQLLEAGVHFGHQTRRWNPKMAEYIYTERNGIYIIDLQKSVGKVDEAYYAIKDVVANGGKVLFVGTKKQAQDSVKSEAERCGMYYVNERWLGGMLTNFKTIQSRIKRLKEIETMANDGTFEVLPKKEVIELKKEWEKLEKNLGGIKDMKEVPEAIFVVDPKKERICIQEAHNLGVKLIGIADTNCDPEELDHVIPGNDDAIRAVKLIVAKMADAVIEANQGVQLTDSTDVAEEATETVEA</sequence>
<comment type="similarity">
    <text evidence="1">Belongs to the universal ribosomal protein uS2 family.</text>
</comment>
<evidence type="ECO:0000255" key="1">
    <source>
        <dbReference type="HAMAP-Rule" id="MF_00291"/>
    </source>
</evidence>
<evidence type="ECO:0000305" key="2"/>
<protein>
    <recommendedName>
        <fullName evidence="1">Small ribosomal subunit protein uS2</fullName>
    </recommendedName>
    <alternativeName>
        <fullName evidence="2">30S ribosomal protein S2</fullName>
    </alternativeName>
</protein>
<keyword id="KW-1185">Reference proteome</keyword>
<keyword id="KW-0687">Ribonucleoprotein</keyword>
<keyword id="KW-0689">Ribosomal protein</keyword>
<gene>
    <name evidence="1" type="primary">rpsB</name>
    <name type="ordered locus">Cphy_2680</name>
</gene>